<comment type="subcellular location">
    <subcellularLocation>
        <location evidence="1">Cell inner membrane</location>
        <topology evidence="1">Multi-pass membrane protein</topology>
    </subcellularLocation>
</comment>
<comment type="similarity">
    <text evidence="1">Belongs to the UPF0266 family.</text>
</comment>
<sequence>MTLTDGVLVIFIIALLGWAIYDQWGTERRHGKTLLRVPLLKRGRADSLIFTGLVAILIWQNVASHGALLTTWLLGALGLLAIYLFWIREPQIRFKREGFFFAGGWVKYNHIKAMNLSEDGVLVMQLDKRRLLIRVKNIDDLERIYHFIVNNQ</sequence>
<proteinExistence type="inferred from homology"/>
<name>Y1432_CROS8</name>
<reference key="1">
    <citation type="journal article" date="2010" name="PLoS ONE">
        <title>Genome sequence of Cronobacter sakazakii BAA-894 and comparative genomic hybridization analysis with other Cronobacter species.</title>
        <authorList>
            <person name="Kucerova E."/>
            <person name="Clifton S.W."/>
            <person name="Xia X.Q."/>
            <person name="Long F."/>
            <person name="Porwollik S."/>
            <person name="Fulton L."/>
            <person name="Fronick C."/>
            <person name="Minx P."/>
            <person name="Kyung K."/>
            <person name="Warren W."/>
            <person name="Fulton R."/>
            <person name="Feng D."/>
            <person name="Wollam A."/>
            <person name="Shah N."/>
            <person name="Bhonagiri V."/>
            <person name="Nash W.E."/>
            <person name="Hallsworth-Pepin K."/>
            <person name="Wilson R.K."/>
            <person name="McClelland M."/>
            <person name="Forsythe S.J."/>
        </authorList>
    </citation>
    <scope>NUCLEOTIDE SEQUENCE [LARGE SCALE GENOMIC DNA]</scope>
    <source>
        <strain>ATCC BAA-894</strain>
    </source>
</reference>
<gene>
    <name type="ordered locus">ESA_01432</name>
</gene>
<organism>
    <name type="scientific">Cronobacter sakazakii (strain ATCC BAA-894)</name>
    <name type="common">Enterobacter sakazakii</name>
    <dbReference type="NCBI Taxonomy" id="290339"/>
    <lineage>
        <taxon>Bacteria</taxon>
        <taxon>Pseudomonadati</taxon>
        <taxon>Pseudomonadota</taxon>
        <taxon>Gammaproteobacteria</taxon>
        <taxon>Enterobacterales</taxon>
        <taxon>Enterobacteriaceae</taxon>
        <taxon>Cronobacter</taxon>
    </lineage>
</organism>
<dbReference type="EMBL" id="CP000783">
    <property type="protein sequence ID" value="ABU76690.1"/>
    <property type="molecule type" value="Genomic_DNA"/>
</dbReference>
<dbReference type="RefSeq" id="WP_012124491.1">
    <property type="nucleotide sequence ID" value="NC_009778.1"/>
</dbReference>
<dbReference type="KEGG" id="esa:ESA_01432"/>
<dbReference type="PATRIC" id="fig|290339.8.peg.1267"/>
<dbReference type="HOGENOM" id="CLU_133645_0_0_6"/>
<dbReference type="Proteomes" id="UP000000260">
    <property type="component" value="Chromosome"/>
</dbReference>
<dbReference type="GO" id="GO:0005886">
    <property type="term" value="C:plasma membrane"/>
    <property type="evidence" value="ECO:0007669"/>
    <property type="project" value="UniProtKB-SubCell"/>
</dbReference>
<dbReference type="HAMAP" id="MF_01071">
    <property type="entry name" value="UPF0266"/>
    <property type="match status" value="1"/>
</dbReference>
<dbReference type="InterPro" id="IPR009328">
    <property type="entry name" value="DUF986"/>
</dbReference>
<dbReference type="NCBIfam" id="NF002791">
    <property type="entry name" value="PRK02913.1"/>
    <property type="match status" value="1"/>
</dbReference>
<dbReference type="Pfam" id="PF06173">
    <property type="entry name" value="DUF986"/>
    <property type="match status" value="1"/>
</dbReference>
<dbReference type="PIRSF" id="PIRSF020687">
    <property type="entry name" value="UCP020687"/>
    <property type="match status" value="1"/>
</dbReference>
<protein>
    <recommendedName>
        <fullName evidence="1">UPF0266 membrane protein ESA_01432</fullName>
    </recommendedName>
</protein>
<evidence type="ECO:0000255" key="1">
    <source>
        <dbReference type="HAMAP-Rule" id="MF_01071"/>
    </source>
</evidence>
<keyword id="KW-0997">Cell inner membrane</keyword>
<keyword id="KW-1003">Cell membrane</keyword>
<keyword id="KW-0472">Membrane</keyword>
<keyword id="KW-1185">Reference proteome</keyword>
<keyword id="KW-0812">Transmembrane</keyword>
<keyword id="KW-1133">Transmembrane helix</keyword>
<feature type="chain" id="PRO_1000149756" description="UPF0266 membrane protein ESA_01432">
    <location>
        <begin position="1"/>
        <end position="152"/>
    </location>
</feature>
<feature type="transmembrane region" description="Helical" evidence="1">
    <location>
        <begin position="1"/>
        <end position="21"/>
    </location>
</feature>
<feature type="transmembrane region" description="Helical" evidence="1">
    <location>
        <begin position="45"/>
        <end position="65"/>
    </location>
</feature>
<feature type="transmembrane region" description="Helical" evidence="1">
    <location>
        <begin position="67"/>
        <end position="87"/>
    </location>
</feature>
<accession>A7MKF9</accession>